<name>L2GL2_MOUSE</name>
<gene>
    <name type="primary">Llgl2</name>
    <name type="synonym">Llglh2</name>
</gene>
<organism>
    <name type="scientific">Mus musculus</name>
    <name type="common">Mouse</name>
    <dbReference type="NCBI Taxonomy" id="10090"/>
    <lineage>
        <taxon>Eukaryota</taxon>
        <taxon>Metazoa</taxon>
        <taxon>Chordata</taxon>
        <taxon>Craniata</taxon>
        <taxon>Vertebrata</taxon>
        <taxon>Euteleostomi</taxon>
        <taxon>Mammalia</taxon>
        <taxon>Eutheria</taxon>
        <taxon>Euarchontoglires</taxon>
        <taxon>Glires</taxon>
        <taxon>Rodentia</taxon>
        <taxon>Myomorpha</taxon>
        <taxon>Muroidea</taxon>
        <taxon>Muridae</taxon>
        <taxon>Murinae</taxon>
        <taxon>Mus</taxon>
        <taxon>Mus</taxon>
    </lineage>
</organism>
<reference key="1">
    <citation type="submission" date="2001-04" db="EMBL/GenBank/DDBJ databases">
        <title>Mammalian homologs of Drosophila gene l(2)gl in hematopoiesis.</title>
        <authorList>
            <person name="Zhuang D.Z."/>
            <person name="Yang Y.-C."/>
        </authorList>
    </citation>
    <scope>NUCLEOTIDE SEQUENCE [MRNA]</scope>
    <source>
        <strain>C57BL/6J</strain>
    </source>
</reference>
<reference key="2">
    <citation type="journal article" date="2005" name="Science">
        <title>The transcriptional landscape of the mammalian genome.</title>
        <authorList>
            <person name="Carninci P."/>
            <person name="Kasukawa T."/>
            <person name="Katayama S."/>
            <person name="Gough J."/>
            <person name="Frith M.C."/>
            <person name="Maeda N."/>
            <person name="Oyama R."/>
            <person name="Ravasi T."/>
            <person name="Lenhard B."/>
            <person name="Wells C."/>
            <person name="Kodzius R."/>
            <person name="Shimokawa K."/>
            <person name="Bajic V.B."/>
            <person name="Brenner S.E."/>
            <person name="Batalov S."/>
            <person name="Forrest A.R."/>
            <person name="Zavolan M."/>
            <person name="Davis M.J."/>
            <person name="Wilming L.G."/>
            <person name="Aidinis V."/>
            <person name="Allen J.E."/>
            <person name="Ambesi-Impiombato A."/>
            <person name="Apweiler R."/>
            <person name="Aturaliya R.N."/>
            <person name="Bailey T.L."/>
            <person name="Bansal M."/>
            <person name="Baxter L."/>
            <person name="Beisel K.W."/>
            <person name="Bersano T."/>
            <person name="Bono H."/>
            <person name="Chalk A.M."/>
            <person name="Chiu K.P."/>
            <person name="Choudhary V."/>
            <person name="Christoffels A."/>
            <person name="Clutterbuck D.R."/>
            <person name="Crowe M.L."/>
            <person name="Dalla E."/>
            <person name="Dalrymple B.P."/>
            <person name="de Bono B."/>
            <person name="Della Gatta G."/>
            <person name="di Bernardo D."/>
            <person name="Down T."/>
            <person name="Engstrom P."/>
            <person name="Fagiolini M."/>
            <person name="Faulkner G."/>
            <person name="Fletcher C.F."/>
            <person name="Fukushima T."/>
            <person name="Furuno M."/>
            <person name="Futaki S."/>
            <person name="Gariboldi M."/>
            <person name="Georgii-Hemming P."/>
            <person name="Gingeras T.R."/>
            <person name="Gojobori T."/>
            <person name="Green R.E."/>
            <person name="Gustincich S."/>
            <person name="Harbers M."/>
            <person name="Hayashi Y."/>
            <person name="Hensch T.K."/>
            <person name="Hirokawa N."/>
            <person name="Hill D."/>
            <person name="Huminiecki L."/>
            <person name="Iacono M."/>
            <person name="Ikeo K."/>
            <person name="Iwama A."/>
            <person name="Ishikawa T."/>
            <person name="Jakt M."/>
            <person name="Kanapin A."/>
            <person name="Katoh M."/>
            <person name="Kawasawa Y."/>
            <person name="Kelso J."/>
            <person name="Kitamura H."/>
            <person name="Kitano H."/>
            <person name="Kollias G."/>
            <person name="Krishnan S.P."/>
            <person name="Kruger A."/>
            <person name="Kummerfeld S.K."/>
            <person name="Kurochkin I.V."/>
            <person name="Lareau L.F."/>
            <person name="Lazarevic D."/>
            <person name="Lipovich L."/>
            <person name="Liu J."/>
            <person name="Liuni S."/>
            <person name="McWilliam S."/>
            <person name="Madan Babu M."/>
            <person name="Madera M."/>
            <person name="Marchionni L."/>
            <person name="Matsuda H."/>
            <person name="Matsuzawa S."/>
            <person name="Miki H."/>
            <person name="Mignone F."/>
            <person name="Miyake S."/>
            <person name="Morris K."/>
            <person name="Mottagui-Tabar S."/>
            <person name="Mulder N."/>
            <person name="Nakano N."/>
            <person name="Nakauchi H."/>
            <person name="Ng P."/>
            <person name="Nilsson R."/>
            <person name="Nishiguchi S."/>
            <person name="Nishikawa S."/>
            <person name="Nori F."/>
            <person name="Ohara O."/>
            <person name="Okazaki Y."/>
            <person name="Orlando V."/>
            <person name="Pang K.C."/>
            <person name="Pavan W.J."/>
            <person name="Pavesi G."/>
            <person name="Pesole G."/>
            <person name="Petrovsky N."/>
            <person name="Piazza S."/>
            <person name="Reed J."/>
            <person name="Reid J.F."/>
            <person name="Ring B.Z."/>
            <person name="Ringwald M."/>
            <person name="Rost B."/>
            <person name="Ruan Y."/>
            <person name="Salzberg S.L."/>
            <person name="Sandelin A."/>
            <person name="Schneider C."/>
            <person name="Schoenbach C."/>
            <person name="Sekiguchi K."/>
            <person name="Semple C.A."/>
            <person name="Seno S."/>
            <person name="Sessa L."/>
            <person name="Sheng Y."/>
            <person name="Shibata Y."/>
            <person name="Shimada H."/>
            <person name="Shimada K."/>
            <person name="Silva D."/>
            <person name="Sinclair B."/>
            <person name="Sperling S."/>
            <person name="Stupka E."/>
            <person name="Sugiura K."/>
            <person name="Sultana R."/>
            <person name="Takenaka Y."/>
            <person name="Taki K."/>
            <person name="Tammoja K."/>
            <person name="Tan S.L."/>
            <person name="Tang S."/>
            <person name="Taylor M.S."/>
            <person name="Tegner J."/>
            <person name="Teichmann S.A."/>
            <person name="Ueda H.R."/>
            <person name="van Nimwegen E."/>
            <person name="Verardo R."/>
            <person name="Wei C.L."/>
            <person name="Yagi K."/>
            <person name="Yamanishi H."/>
            <person name="Zabarovsky E."/>
            <person name="Zhu S."/>
            <person name="Zimmer A."/>
            <person name="Hide W."/>
            <person name="Bult C."/>
            <person name="Grimmond S.M."/>
            <person name="Teasdale R.D."/>
            <person name="Liu E.T."/>
            <person name="Brusic V."/>
            <person name="Quackenbush J."/>
            <person name="Wahlestedt C."/>
            <person name="Mattick J.S."/>
            <person name="Hume D.A."/>
            <person name="Kai C."/>
            <person name="Sasaki D."/>
            <person name="Tomaru Y."/>
            <person name="Fukuda S."/>
            <person name="Kanamori-Katayama M."/>
            <person name="Suzuki M."/>
            <person name="Aoki J."/>
            <person name="Arakawa T."/>
            <person name="Iida J."/>
            <person name="Imamura K."/>
            <person name="Itoh M."/>
            <person name="Kato T."/>
            <person name="Kawaji H."/>
            <person name="Kawagashira N."/>
            <person name="Kawashima T."/>
            <person name="Kojima M."/>
            <person name="Kondo S."/>
            <person name="Konno H."/>
            <person name="Nakano K."/>
            <person name="Ninomiya N."/>
            <person name="Nishio T."/>
            <person name="Okada M."/>
            <person name="Plessy C."/>
            <person name="Shibata K."/>
            <person name="Shiraki T."/>
            <person name="Suzuki S."/>
            <person name="Tagami M."/>
            <person name="Waki K."/>
            <person name="Watahiki A."/>
            <person name="Okamura-Oho Y."/>
            <person name="Suzuki H."/>
            <person name="Kawai J."/>
            <person name="Hayashizaki Y."/>
        </authorList>
    </citation>
    <scope>NUCLEOTIDE SEQUENCE [LARGE SCALE MRNA]</scope>
    <source>
        <strain>C57BL/6J</strain>
        <tissue>Amnion</tissue>
    </source>
</reference>
<reference key="3">
    <citation type="journal article" date="2009" name="PLoS Biol.">
        <title>Lineage-specific biology revealed by a finished genome assembly of the mouse.</title>
        <authorList>
            <person name="Church D.M."/>
            <person name="Goodstadt L."/>
            <person name="Hillier L.W."/>
            <person name="Zody M.C."/>
            <person name="Goldstein S."/>
            <person name="She X."/>
            <person name="Bult C.J."/>
            <person name="Agarwala R."/>
            <person name="Cherry J.L."/>
            <person name="DiCuccio M."/>
            <person name="Hlavina W."/>
            <person name="Kapustin Y."/>
            <person name="Meric P."/>
            <person name="Maglott D."/>
            <person name="Birtle Z."/>
            <person name="Marques A.C."/>
            <person name="Graves T."/>
            <person name="Zhou S."/>
            <person name="Teague B."/>
            <person name="Potamousis K."/>
            <person name="Churas C."/>
            <person name="Place M."/>
            <person name="Herschleb J."/>
            <person name="Runnheim R."/>
            <person name="Forrest D."/>
            <person name="Amos-Landgraf J."/>
            <person name="Schwartz D.C."/>
            <person name="Cheng Z."/>
            <person name="Lindblad-Toh K."/>
            <person name="Eichler E.E."/>
            <person name="Ponting C.P."/>
        </authorList>
    </citation>
    <scope>NUCLEOTIDE SEQUENCE [LARGE SCALE GENOMIC DNA]</scope>
    <source>
        <strain>C57BL/6J</strain>
    </source>
</reference>
<reference key="4">
    <citation type="journal article" date="2004" name="Genome Res.">
        <title>The status, quality, and expansion of the NIH full-length cDNA project: the Mammalian Gene Collection (MGC).</title>
        <authorList>
            <consortium name="The MGC Project Team"/>
        </authorList>
    </citation>
    <scope>NUCLEOTIDE SEQUENCE [LARGE SCALE MRNA]</scope>
    <source>
        <strain>FVB/N</strain>
        <tissue>Mammary tumor</tissue>
    </source>
</reference>
<reference key="5">
    <citation type="journal article" date="2007" name="Proc. Natl. Acad. Sci. U.S.A.">
        <title>Large-scale phosphorylation analysis of mouse liver.</title>
        <authorList>
            <person name="Villen J."/>
            <person name="Beausoleil S.A."/>
            <person name="Gerber S.A."/>
            <person name="Gygi S.P."/>
        </authorList>
    </citation>
    <scope>PHOSPHORYLATION [LARGE SCALE ANALYSIS] AT SER-1022</scope>
    <scope>IDENTIFICATION BY MASS SPECTROMETRY [LARGE SCALE ANALYSIS]</scope>
    <source>
        <tissue>Liver</tissue>
    </source>
</reference>
<reference key="6">
    <citation type="journal article" date="2010" name="Cell">
        <title>A tissue-specific atlas of mouse protein phosphorylation and expression.</title>
        <authorList>
            <person name="Huttlin E.L."/>
            <person name="Jedrychowski M.P."/>
            <person name="Elias J.E."/>
            <person name="Goswami T."/>
            <person name="Rad R."/>
            <person name="Beausoleil S.A."/>
            <person name="Villen J."/>
            <person name="Haas W."/>
            <person name="Sowa M.E."/>
            <person name="Gygi S.P."/>
        </authorList>
    </citation>
    <scope>PHOSPHORYLATION [LARGE SCALE ANALYSIS] AT SER-1022</scope>
    <scope>IDENTIFICATION BY MASS SPECTROMETRY [LARGE SCALE ANALYSIS]</scope>
    <source>
        <tissue>Kidney</tissue>
        <tissue>Lung</tissue>
        <tissue>Pancreas</tissue>
    </source>
</reference>
<keyword id="KW-0131">Cell cycle</keyword>
<keyword id="KW-0132">Cell division</keyword>
<keyword id="KW-0963">Cytoplasm</keyword>
<keyword id="KW-0268">Exocytosis</keyword>
<keyword id="KW-0597">Phosphoprotein</keyword>
<keyword id="KW-1185">Reference proteome</keyword>
<keyword id="KW-0677">Repeat</keyword>
<keyword id="KW-0853">WD repeat</keyword>
<dbReference type="EMBL" id="AY033650">
    <property type="protein sequence ID" value="AAK52346.1"/>
    <property type="molecule type" value="mRNA"/>
</dbReference>
<dbReference type="EMBL" id="AK167536">
    <property type="protein sequence ID" value="BAE39604.1"/>
    <property type="molecule type" value="mRNA"/>
</dbReference>
<dbReference type="EMBL" id="AL645647">
    <property type="status" value="NOT_ANNOTATED_CDS"/>
    <property type="molecule type" value="Genomic_DNA"/>
</dbReference>
<dbReference type="EMBL" id="AL645852">
    <property type="status" value="NOT_ANNOTATED_CDS"/>
    <property type="molecule type" value="Genomic_DNA"/>
</dbReference>
<dbReference type="EMBL" id="BC037226">
    <property type="protein sequence ID" value="AAH37226.1"/>
    <property type="molecule type" value="mRNA"/>
</dbReference>
<dbReference type="CCDS" id="CCDS25649.1"/>
<dbReference type="RefSeq" id="NP_001239461.1">
    <property type="nucleotide sequence ID" value="NM_001252532.1"/>
</dbReference>
<dbReference type="RefSeq" id="NP_663413.2">
    <property type="nucleotide sequence ID" value="NM_145438.2"/>
</dbReference>
<dbReference type="SMR" id="Q3TJ91"/>
<dbReference type="BioGRID" id="229887">
    <property type="interactions" value="1"/>
</dbReference>
<dbReference type="FunCoup" id="Q3TJ91">
    <property type="interactions" value="1749"/>
</dbReference>
<dbReference type="STRING" id="10090.ENSMUSP00000136054"/>
<dbReference type="GlyGen" id="Q3TJ91">
    <property type="glycosylation" value="2 sites, 1 N-linked glycan (1 site)"/>
</dbReference>
<dbReference type="iPTMnet" id="Q3TJ91"/>
<dbReference type="PhosphoSitePlus" id="Q3TJ91"/>
<dbReference type="jPOST" id="Q3TJ91"/>
<dbReference type="PaxDb" id="10090-ENSMUSP00000099321"/>
<dbReference type="PeptideAtlas" id="Q3TJ91"/>
<dbReference type="ProteomicsDB" id="252452"/>
<dbReference type="Pumba" id="Q3TJ91"/>
<dbReference type="Antibodypedia" id="19581">
    <property type="antibodies" value="206 antibodies from 27 providers"/>
</dbReference>
<dbReference type="DNASU" id="217325"/>
<dbReference type="Ensembl" id="ENSMUST00000103032.11">
    <property type="protein sequence ID" value="ENSMUSP00000099321.5"/>
    <property type="gene ID" value="ENSMUSG00000020782.19"/>
</dbReference>
<dbReference type="GeneID" id="217325"/>
<dbReference type="KEGG" id="mmu:217325"/>
<dbReference type="UCSC" id="uc007mit.1">
    <property type="organism name" value="mouse"/>
</dbReference>
<dbReference type="AGR" id="MGI:1918843"/>
<dbReference type="CTD" id="3993"/>
<dbReference type="MGI" id="MGI:1918843">
    <property type="gene designation" value="Llgl2"/>
</dbReference>
<dbReference type="VEuPathDB" id="HostDB:ENSMUSG00000020782"/>
<dbReference type="eggNOG" id="KOG1983">
    <property type="taxonomic scope" value="Eukaryota"/>
</dbReference>
<dbReference type="GeneTree" id="ENSGT00950000182906"/>
<dbReference type="HOGENOM" id="CLU_005214_0_0_1"/>
<dbReference type="InParanoid" id="Q3TJ91"/>
<dbReference type="OrthoDB" id="19944at2759"/>
<dbReference type="PhylomeDB" id="Q3TJ91"/>
<dbReference type="TreeFam" id="TF314585"/>
<dbReference type="BioGRID-ORCS" id="217325">
    <property type="hits" value="5 hits in 77 CRISPR screens"/>
</dbReference>
<dbReference type="ChiTaRS" id="Llgl2">
    <property type="organism name" value="mouse"/>
</dbReference>
<dbReference type="PRO" id="PR:Q3TJ91"/>
<dbReference type="Proteomes" id="UP000000589">
    <property type="component" value="Chromosome 11"/>
</dbReference>
<dbReference type="RNAct" id="Q3TJ91">
    <property type="molecule type" value="protein"/>
</dbReference>
<dbReference type="Bgee" id="ENSMUSG00000020782">
    <property type="expression patterns" value="Expressed in retinal neural layer and 185 other cell types or tissues"/>
</dbReference>
<dbReference type="ExpressionAtlas" id="Q3TJ91">
    <property type="expression patterns" value="baseline and differential"/>
</dbReference>
<dbReference type="GO" id="GO:0005829">
    <property type="term" value="C:cytosol"/>
    <property type="evidence" value="ECO:0007669"/>
    <property type="project" value="Ensembl"/>
</dbReference>
<dbReference type="GO" id="GO:0043231">
    <property type="term" value="C:intracellular membrane-bounded organelle"/>
    <property type="evidence" value="ECO:0007669"/>
    <property type="project" value="Ensembl"/>
</dbReference>
<dbReference type="GO" id="GO:0030165">
    <property type="term" value="F:PDZ domain binding"/>
    <property type="evidence" value="ECO:0007669"/>
    <property type="project" value="Ensembl"/>
</dbReference>
<dbReference type="GO" id="GO:0060670">
    <property type="term" value="P:branching involved in labyrinthine layer morphogenesis"/>
    <property type="evidence" value="ECO:0000315"/>
    <property type="project" value="MGI"/>
</dbReference>
<dbReference type="GO" id="GO:0051301">
    <property type="term" value="P:cell division"/>
    <property type="evidence" value="ECO:0007669"/>
    <property type="project" value="UniProtKB-KW"/>
</dbReference>
<dbReference type="GO" id="GO:0016332">
    <property type="term" value="P:establishment or maintenance of polarity of embryonic epithelium"/>
    <property type="evidence" value="ECO:0000315"/>
    <property type="project" value="MGI"/>
</dbReference>
<dbReference type="GO" id="GO:0006887">
    <property type="term" value="P:exocytosis"/>
    <property type="evidence" value="ECO:0007669"/>
    <property type="project" value="UniProtKB-KW"/>
</dbReference>
<dbReference type="GO" id="GO:0015820">
    <property type="term" value="P:L-leucine transport"/>
    <property type="evidence" value="ECO:0007669"/>
    <property type="project" value="Ensembl"/>
</dbReference>
<dbReference type="GO" id="GO:0060716">
    <property type="term" value="P:labyrinthine layer blood vessel development"/>
    <property type="evidence" value="ECO:0000315"/>
    <property type="project" value="MGI"/>
</dbReference>
<dbReference type="GO" id="GO:0035264">
    <property type="term" value="P:multicellular organism growth"/>
    <property type="evidence" value="ECO:0000315"/>
    <property type="project" value="MGI"/>
</dbReference>
<dbReference type="GO" id="GO:0001890">
    <property type="term" value="P:placenta development"/>
    <property type="evidence" value="ECO:0000315"/>
    <property type="project" value="MGI"/>
</dbReference>
<dbReference type="GO" id="GO:0009791">
    <property type="term" value="P:post-embryonic development"/>
    <property type="evidence" value="ECO:0000315"/>
    <property type="project" value="MGI"/>
</dbReference>
<dbReference type="GO" id="GO:0032878">
    <property type="term" value="P:regulation of establishment or maintenance of cell polarity"/>
    <property type="evidence" value="ECO:0007669"/>
    <property type="project" value="Ensembl"/>
</dbReference>
<dbReference type="FunFam" id="2.130.10.10:FF:000170">
    <property type="entry name" value="lethal(2) giant larvae protein homolog 2 isoform X2"/>
    <property type="match status" value="1"/>
</dbReference>
<dbReference type="FunFam" id="2.130.10.10:FF:000496">
    <property type="entry name" value="LLGL2, scribble cell polarity complex component"/>
    <property type="match status" value="1"/>
</dbReference>
<dbReference type="Gene3D" id="2.130.10.10">
    <property type="entry name" value="YVTN repeat-like/Quinoprotein amine dehydrogenase"/>
    <property type="match status" value="2"/>
</dbReference>
<dbReference type="InterPro" id="IPR000664">
    <property type="entry name" value="Lethal2_giant"/>
</dbReference>
<dbReference type="InterPro" id="IPR013577">
    <property type="entry name" value="LLGL2"/>
</dbReference>
<dbReference type="InterPro" id="IPR015943">
    <property type="entry name" value="WD40/YVTN_repeat-like_dom_sf"/>
</dbReference>
<dbReference type="InterPro" id="IPR036322">
    <property type="entry name" value="WD40_repeat_dom_sf"/>
</dbReference>
<dbReference type="InterPro" id="IPR001680">
    <property type="entry name" value="WD40_rpt"/>
</dbReference>
<dbReference type="PANTHER" id="PTHR10241">
    <property type="entry name" value="LETHAL 2 GIANT LARVAE PROTEIN"/>
    <property type="match status" value="1"/>
</dbReference>
<dbReference type="PANTHER" id="PTHR10241:SF20">
    <property type="entry name" value="LLGL SCRIBBLE CELL POLARITY COMPLEX COMPONENT 2"/>
    <property type="match status" value="1"/>
</dbReference>
<dbReference type="Pfam" id="PF08366">
    <property type="entry name" value="LLGL"/>
    <property type="match status" value="1"/>
</dbReference>
<dbReference type="Pfam" id="PF00400">
    <property type="entry name" value="WD40"/>
    <property type="match status" value="1"/>
</dbReference>
<dbReference type="PRINTS" id="PR00962">
    <property type="entry name" value="LETHAL2GIANT"/>
</dbReference>
<dbReference type="SMART" id="SM00320">
    <property type="entry name" value="WD40"/>
    <property type="match status" value="5"/>
</dbReference>
<dbReference type="SUPFAM" id="SSF50978">
    <property type="entry name" value="WD40 repeat-like"/>
    <property type="match status" value="2"/>
</dbReference>
<dbReference type="PROSITE" id="PS00678">
    <property type="entry name" value="WD_REPEATS_1"/>
    <property type="match status" value="1"/>
</dbReference>
<dbReference type="PROSITE" id="PS50082">
    <property type="entry name" value="WD_REPEATS_2"/>
    <property type="match status" value="1"/>
</dbReference>
<proteinExistence type="evidence at protein level"/>
<sequence>MRRFLRTGHDPARERLKRDLFQFNKTVEHGFPHQPSALGYSPSLRILAIGTRSGAVKLYGAPGVEFMGLHKENNAVLQIHFLPGQCQLVTLLDDNSLHLWSLKVKGGVSELQEEESFTLRGPPGAAPSATQVTEILPHSSGELLYLGTESGNVFVVQLPGFRTLHDRTICSDEVLQWLPEEARHRRVFEMVEALQEHPRDPNQILIGYSRGLVVIWDLQGSRALSHFLSSQQLENASWQRDGCLIVTCHSDGSHCQWPVSSDTQNPEPLRSSIPYGPFPCKAITKIFWLTTRQGLPFTIFQGGMPRASYGDRHCISVVHNGQQTAFDFTSRVIDFTVLSEADPAAAFDDPYALVVLAEEELVVIDLQTPGWPPVQLPYLASLHCSAITCSHHVSNIPLKLWERIIAAGSRQNSHFSTMEWPIDGGTSLAPPPPQRDLLLTGHEDGTVRFWDASGVCLRLLYKLSTVRVFLTDTDPSENLIAQGEDEWPPLRKVGSFDPYSDDPRLGIQKIFLCKYSGYLAVAGTAGQVLVLELNDEAAEHAVEQVEADLLQDQEGYRWKGHERLAARPGPVCFEAGFQPFVLVQCQPPAVVTSLALHSEWRLVAFGTSHGFGLFDHQQRRQVFVKCTLHPSDQLALEGPLSRVKSLKKSLRQSFRRMRRSRVSSHKRRPGGPTGEAQAQAVNIKAERTGLQNMELAPVQRKIEARSAEDSFTGFVRTLYFADTYLRDSSRHCPSLWAGTNGGTVYAFSLRVPPAERRTDEPVRAEQAKEIQLMHRAPVVGILVLDGHNVPLPEPLEVAHDLSKSPDMQGSHQLLVVSEEQFKVFTLPKVSAKLKLKLTALEGSRVRRVGVAHFGSCRAEDYGEHHLAVLTNLGDIQVVSMPLLKPQVRYSCIRREDVSGIASCVFTKYGQGFYLISPSEFERFSLSTKWLVEPRCLVDSTKAKKHNRPSNGNGTGLKMTSSGHVRNSKSQSDGDEKKPGPVMEHALLNDAWVLKEIQSTLEGDRRSYGNWHPHRVAVGCRLSNGEAE</sequence>
<accession>Q3TJ91</accession>
<accession>B1ATB0</accession>
<accession>Q6YP20</accession>
<accession>Q8K1X0</accession>
<protein>
    <recommendedName>
        <fullName>LLGL scribble cell polarity complex component 2</fullName>
    </recommendedName>
    <alternativeName>
        <fullName>Lethal giant larvae-like protein 2</fullName>
    </alternativeName>
    <alternativeName>
        <fullName>Lethal(2) giant larvae protein homolog 2</fullName>
    </alternativeName>
</protein>
<comment type="function">
    <text evidence="1">Part of a complex with GPSM2/LGN, PRKCI/aPKC and PARD6B/Par-6, which may ensure the correct organization and orientation of bipolar spindles for normal cell division. This complex plays roles in the initial phase of the establishment of epithelial cell polarity (By similarity).</text>
</comment>
<comment type="subunit">
    <text evidence="1">Interacts with GPSM2/LGN, PRKCI/aPKC and PARD6B/Par-6. The complex is enhanced during mitosis. Interacts with DCAF1 (By similarity).</text>
</comment>
<comment type="subcellular location">
    <subcellularLocation>
        <location evidence="1">Cytoplasm</location>
    </subcellularLocation>
    <text evidence="1">Localized in the perinuclear structure and faintly at the cell-cell contacts sites in the interphase. Localized at the cell periphery during metaphase. Cortical localization in mitotic cells (By similarity).</text>
</comment>
<comment type="PTM">
    <text evidence="1">Phosphorylated at Ser-653 by PRKCI. Phosphorylation is enhanced during cell polarization induced by calcium. Phosphorylation may occur during the cell-cell contact-induced cell polarization and may contribute to the segregation of LLGL2 from the PRKCI/aPKC and PARD6B/Par-6 complex (By similarity).</text>
</comment>
<comment type="similarity">
    <text evidence="4">Belongs to the WD repeat L(2)GL family.</text>
</comment>
<feature type="chain" id="PRO_0000232729" description="LLGL scribble cell polarity complex component 2">
    <location>
        <begin position="1"/>
        <end position="1027"/>
    </location>
</feature>
<feature type="repeat" description="WD 1">
    <location>
        <begin position="36"/>
        <end position="69"/>
    </location>
</feature>
<feature type="repeat" description="WD 2">
    <location>
        <begin position="76"/>
        <end position="117"/>
    </location>
</feature>
<feature type="repeat" description="WD 3">
    <location>
        <begin position="132"/>
        <end position="169"/>
    </location>
</feature>
<feature type="repeat" description="WD 4">
    <location>
        <begin position="193"/>
        <end position="227"/>
    </location>
</feature>
<feature type="repeat" description="WD 5">
    <location>
        <begin position="233"/>
        <end position="268"/>
    </location>
</feature>
<feature type="repeat" description="WD 6">
    <location>
        <begin position="282"/>
        <end position="324"/>
    </location>
</feature>
<feature type="repeat" description="WD 7">
    <location>
        <begin position="332"/>
        <end position="366"/>
    </location>
</feature>
<feature type="repeat" description="WD 8">
    <location>
        <begin position="388"/>
        <end position="464"/>
    </location>
</feature>
<feature type="repeat" description="WD 9">
    <location>
        <begin position="508"/>
        <end position="583"/>
    </location>
</feature>
<feature type="repeat" description="WD 10">
    <location>
        <begin position="592"/>
        <end position="653"/>
    </location>
</feature>
<feature type="repeat" description="WD 11">
    <location>
        <begin position="715"/>
        <end position="771"/>
    </location>
</feature>
<feature type="repeat" description="WD 12">
    <location>
        <begin position="780"/>
        <end position="832"/>
    </location>
</feature>
<feature type="repeat" description="WD 13">
    <location>
        <begin position="837"/>
        <end position="890"/>
    </location>
</feature>
<feature type="repeat" description="WD 14">
    <location>
        <begin position="904"/>
        <end position="927"/>
    </location>
</feature>
<feature type="region of interest" description="Disordered" evidence="3">
    <location>
        <begin position="654"/>
        <end position="678"/>
    </location>
</feature>
<feature type="region of interest" description="Disordered" evidence="3">
    <location>
        <begin position="940"/>
        <end position="981"/>
    </location>
</feature>
<feature type="compositionally biased region" description="Basic residues" evidence="3">
    <location>
        <begin position="654"/>
        <end position="669"/>
    </location>
</feature>
<feature type="compositionally biased region" description="Polar residues" evidence="3">
    <location>
        <begin position="957"/>
        <end position="970"/>
    </location>
</feature>
<feature type="modified residue" description="Phosphoserine" evidence="2">
    <location>
        <position position="653"/>
    </location>
</feature>
<feature type="modified residue" description="Phosphoserine" evidence="2">
    <location>
        <position position="971"/>
    </location>
</feature>
<feature type="modified residue" description="Phosphoserine" evidence="5 6">
    <location>
        <position position="1022"/>
    </location>
</feature>
<feature type="sequence conflict" description="In Ref. 1; AAK52346." evidence="4" ref="1">
    <original>F</original>
    <variation>L</variation>
    <location>
        <position position="154"/>
    </location>
</feature>
<feature type="sequence conflict" description="In Ref. 1; AAK52346." evidence="4" ref="1">
    <original>H</original>
    <variation>N</variation>
    <location>
        <position position="313"/>
    </location>
</feature>
<feature type="sequence conflict" description="In Ref. 1; AAK52346." evidence="4" ref="1">
    <original>A</original>
    <variation>G</variation>
    <location>
        <position position="325"/>
    </location>
</feature>
<feature type="sequence conflict" description="In Ref. 1; AAK52346 and 3; AAH37226." evidence="4" ref="1 3">
    <original>I</original>
    <variation>S</variation>
    <location>
        <position position="480"/>
    </location>
</feature>
<feature type="sequence conflict" description="In Ref. 1; AAK52346." evidence="4" ref="1">
    <original>IKA</original>
    <variation>TKT</variation>
    <location>
        <begin position="683"/>
        <end position="685"/>
    </location>
</feature>
<feature type="sequence conflict" description="In Ref. 1; AAK52346." evidence="4" ref="1">
    <original>G</original>
    <variation>S</variation>
    <location>
        <position position="742"/>
    </location>
</feature>
<feature type="sequence conflict" description="In Ref. 1; AAK52346." evidence="4" ref="1">
    <original>RRTDE</original>
    <variation>KKINK</variation>
    <location>
        <begin position="756"/>
        <end position="760"/>
    </location>
</feature>
<feature type="sequence conflict" description="In Ref. 1; AAK52346." evidence="4" ref="1">
    <original>E</original>
    <variation>K</variation>
    <location>
        <position position="765"/>
    </location>
</feature>
<feature type="sequence conflict" description="In Ref. 2; BAE39604." evidence="4" ref="2">
    <original>L</original>
    <variation>I</variation>
    <location>
        <position position="791"/>
    </location>
</feature>
<feature type="sequence conflict" description="In Ref. 1; AAK52346 and 3; AAH37226." evidence="4" ref="1 3">
    <original>L</original>
    <variation>P</variation>
    <location>
        <position position="956"/>
    </location>
</feature>
<evidence type="ECO:0000250" key="1"/>
<evidence type="ECO:0000250" key="2">
    <source>
        <dbReference type="UniProtKB" id="Q6P1M3"/>
    </source>
</evidence>
<evidence type="ECO:0000256" key="3">
    <source>
        <dbReference type="SAM" id="MobiDB-lite"/>
    </source>
</evidence>
<evidence type="ECO:0000305" key="4"/>
<evidence type="ECO:0007744" key="5">
    <source>
    </source>
</evidence>
<evidence type="ECO:0007744" key="6">
    <source>
    </source>
</evidence>